<name>GPR_BACC4</name>
<dbReference type="EC" id="3.4.24.78" evidence="1"/>
<dbReference type="EMBL" id="CP001176">
    <property type="protein sequence ID" value="ACK60733.1"/>
    <property type="molecule type" value="Genomic_DNA"/>
</dbReference>
<dbReference type="RefSeq" id="WP_000662616.1">
    <property type="nucleotide sequence ID" value="NC_011725.1"/>
</dbReference>
<dbReference type="SMR" id="B7HCU7"/>
<dbReference type="MEROPS" id="A25.001"/>
<dbReference type="KEGG" id="bcb:BCB4264_A4440"/>
<dbReference type="HOGENOM" id="CLU_055087_1_0_9"/>
<dbReference type="Proteomes" id="UP000007096">
    <property type="component" value="Chromosome"/>
</dbReference>
<dbReference type="GO" id="GO:0004222">
    <property type="term" value="F:metalloendopeptidase activity"/>
    <property type="evidence" value="ECO:0007669"/>
    <property type="project" value="UniProtKB-UniRule"/>
</dbReference>
<dbReference type="GO" id="GO:0006508">
    <property type="term" value="P:proteolysis"/>
    <property type="evidence" value="ECO:0007669"/>
    <property type="project" value="UniProtKB-UniRule"/>
</dbReference>
<dbReference type="GO" id="GO:0009847">
    <property type="term" value="P:spore germination"/>
    <property type="evidence" value="ECO:0007669"/>
    <property type="project" value="UniProtKB-UniRule"/>
</dbReference>
<dbReference type="FunFam" id="3.40.50.1450:FF:000004">
    <property type="entry name" value="Germination protease"/>
    <property type="match status" value="1"/>
</dbReference>
<dbReference type="Gene3D" id="3.40.50.1450">
    <property type="entry name" value="HybD-like"/>
    <property type="match status" value="1"/>
</dbReference>
<dbReference type="HAMAP" id="MF_00626">
    <property type="entry name" value="Germination_prot"/>
    <property type="match status" value="1"/>
</dbReference>
<dbReference type="InterPro" id="IPR023430">
    <property type="entry name" value="Pept_HybD-like_dom_sf"/>
</dbReference>
<dbReference type="InterPro" id="IPR005080">
    <property type="entry name" value="Peptidase_A25"/>
</dbReference>
<dbReference type="NCBIfam" id="TIGR01441">
    <property type="entry name" value="GPR"/>
    <property type="match status" value="1"/>
</dbReference>
<dbReference type="Pfam" id="PF03418">
    <property type="entry name" value="Peptidase_A25"/>
    <property type="match status" value="1"/>
</dbReference>
<dbReference type="PIRSF" id="PIRSF019549">
    <property type="entry name" value="Peptidase_A25"/>
    <property type="match status" value="1"/>
</dbReference>
<dbReference type="SUPFAM" id="SSF53163">
    <property type="entry name" value="HybD-like"/>
    <property type="match status" value="1"/>
</dbReference>
<keyword id="KW-0378">Hydrolase</keyword>
<keyword id="KW-0645">Protease</keyword>
<keyword id="KW-0865">Zymogen</keyword>
<gene>
    <name evidence="1" type="primary">gpr</name>
    <name type="ordered locus">BCB4264_A4440</name>
</gene>
<protein>
    <recommendedName>
        <fullName evidence="1">Germination protease</fullName>
        <ecNumber evidence="1">3.4.24.78</ecNumber>
    </recommendedName>
    <alternativeName>
        <fullName evidence="1">GPR endopeptidase</fullName>
    </alternativeName>
    <alternativeName>
        <fullName evidence="1">Germination proteinase</fullName>
    </alternativeName>
    <alternativeName>
        <fullName evidence="1">Spore protease</fullName>
    </alternativeName>
</protein>
<organism>
    <name type="scientific">Bacillus cereus (strain B4264)</name>
    <dbReference type="NCBI Taxonomy" id="405532"/>
    <lineage>
        <taxon>Bacteria</taxon>
        <taxon>Bacillati</taxon>
        <taxon>Bacillota</taxon>
        <taxon>Bacilli</taxon>
        <taxon>Bacillales</taxon>
        <taxon>Bacillaceae</taxon>
        <taxon>Bacillus</taxon>
        <taxon>Bacillus cereus group</taxon>
    </lineage>
</organism>
<feature type="propeptide" id="PRO_1000130528" evidence="1">
    <location>
        <begin position="1"/>
        <end position="15"/>
    </location>
</feature>
<feature type="chain" id="PRO_1000130529" description="Germination protease">
    <location>
        <begin position="16"/>
        <end position="367"/>
    </location>
</feature>
<accession>B7HCU7</accession>
<sequence length="367" mass="40336">MKEPLDLSKYSIRTDLAVEAHQMLQESQEEQKGIQGVIVKEREEEGTIITKVTIDEAASEAMGKKPGNYLTLEVQGIRQQDTELQQKVERIFAKEFSCFLEEVGVTKEASCLIVGLGNWNVTPDALGPIVVENVLVTRHLFQLQPESVEEGFRPVSAIRPGVMGITGIETSDVIYGIIEKTNPDFVIAIDALAARSIERVNSTIQISDTGIHPGSGVGNKRKELSKDTLGIPVIAIGVPTVVDAVSITSDTIDFILKHFGREMKEGNKPSRSLLPAGFSFGEKKKLTEEDMPDEKSRNMFLGAVGTLEEEEKRRLIYEVLSPLGHNLMVTPKEVDTFIEDMANVIASGLNAALHHQIDQDNTGAYTH</sequence>
<reference key="1">
    <citation type="submission" date="2008-10" db="EMBL/GenBank/DDBJ databases">
        <title>Genome sequence of Bacillus cereus B4264.</title>
        <authorList>
            <person name="Dodson R.J."/>
            <person name="Durkin A.S."/>
            <person name="Rosovitz M.J."/>
            <person name="Rasko D.A."/>
            <person name="Hoffmaster A."/>
            <person name="Ravel J."/>
            <person name="Sutton G."/>
        </authorList>
    </citation>
    <scope>NUCLEOTIDE SEQUENCE [LARGE SCALE GENOMIC DNA]</scope>
    <source>
        <strain>B4264</strain>
    </source>
</reference>
<proteinExistence type="inferred from homology"/>
<comment type="function">
    <text evidence="1">Initiates the rapid degradation of small, acid-soluble proteins during spore germination.</text>
</comment>
<comment type="catalytic activity">
    <reaction evidence="1">
        <text>Endopeptidase action with P4 Glu or Asp, P1 preferably Glu &gt; Asp, P1' hydrophobic and P2' Ala.</text>
        <dbReference type="EC" id="3.4.24.78"/>
    </reaction>
</comment>
<comment type="subunit">
    <text evidence="1">Homotetramer.</text>
</comment>
<comment type="PTM">
    <text evidence="1">Autoproteolytically processed. The inactive tetrameric zymogen termed p46 autoprocesses to a smaller form termed p41, which is active only during spore germination.</text>
</comment>
<comment type="similarity">
    <text evidence="1">Belongs to the peptidase A25 family.</text>
</comment>
<evidence type="ECO:0000255" key="1">
    <source>
        <dbReference type="HAMAP-Rule" id="MF_00626"/>
    </source>
</evidence>